<evidence type="ECO:0000250" key="1">
    <source>
        <dbReference type="UniProtKB" id="Q96E11"/>
    </source>
</evidence>
<evidence type="ECO:0000255" key="2"/>
<evidence type="ECO:0000305" key="3"/>
<feature type="transit peptide" description="Mitochondrion" evidence="2">
    <location>
        <begin position="1"/>
        <end position="55"/>
    </location>
</feature>
<feature type="chain" id="PRO_0000282653" description="Ribosome-recycling factor, mitochondrial">
    <location>
        <begin position="56"/>
        <end position="262"/>
    </location>
</feature>
<proteinExistence type="evidence at transcript level"/>
<sequence>MALGLRCFRLVHPAFCNSLAALTRPVSEVTLQTVRGRQNDHGQCMAYAAVPVRHFATKKAKAKGKGQSQTRMNLNTALVEDIINLEEVDEEMKSVIEALKDNFNKTVNIRTSPGALDNITVVTADGKLPLNQISQISMKSPQLILVNMASFPECTAAAIKAIRESGMNLNPEVEGTLIRVPIPKVTREHREMLVKLAKQNTNKAKDSLRKVRTNAINKVKKSKDKASEDTIRLIEKQISQMADDTVAELDRHLAVKTKELLG</sequence>
<name>RRFM_BOVIN</name>
<organism>
    <name type="scientific">Bos taurus</name>
    <name type="common">Bovine</name>
    <dbReference type="NCBI Taxonomy" id="9913"/>
    <lineage>
        <taxon>Eukaryota</taxon>
        <taxon>Metazoa</taxon>
        <taxon>Chordata</taxon>
        <taxon>Craniata</taxon>
        <taxon>Vertebrata</taxon>
        <taxon>Euteleostomi</taxon>
        <taxon>Mammalia</taxon>
        <taxon>Eutheria</taxon>
        <taxon>Laurasiatheria</taxon>
        <taxon>Artiodactyla</taxon>
        <taxon>Ruminantia</taxon>
        <taxon>Pecora</taxon>
        <taxon>Bovidae</taxon>
        <taxon>Bovinae</taxon>
        <taxon>Bos</taxon>
    </lineage>
</organism>
<keyword id="KW-0496">Mitochondrion</keyword>
<keyword id="KW-0648">Protein biosynthesis</keyword>
<keyword id="KW-1185">Reference proteome</keyword>
<keyword id="KW-0809">Transit peptide</keyword>
<accession>Q0VCQ4</accession>
<dbReference type="EMBL" id="BC120054">
    <property type="protein sequence ID" value="AAI20055.1"/>
    <property type="molecule type" value="mRNA"/>
</dbReference>
<dbReference type="RefSeq" id="NP_001069775.1">
    <property type="nucleotide sequence ID" value="NM_001076307.1"/>
</dbReference>
<dbReference type="RefSeq" id="XP_059747448.1">
    <property type="nucleotide sequence ID" value="XM_059891465.1"/>
</dbReference>
<dbReference type="SMR" id="Q0VCQ4"/>
<dbReference type="FunCoup" id="Q0VCQ4">
    <property type="interactions" value="1209"/>
</dbReference>
<dbReference type="STRING" id="9913.ENSBTAP00000024516"/>
<dbReference type="PaxDb" id="9913-ENSBTAP00000055896"/>
<dbReference type="GeneID" id="614013"/>
<dbReference type="KEGG" id="bta:614013"/>
<dbReference type="CTD" id="92399"/>
<dbReference type="eggNOG" id="KOG4759">
    <property type="taxonomic scope" value="Eukaryota"/>
</dbReference>
<dbReference type="HOGENOM" id="CLU_073981_4_1_1"/>
<dbReference type="InParanoid" id="Q0VCQ4"/>
<dbReference type="OrthoDB" id="407355at2759"/>
<dbReference type="Proteomes" id="UP000009136">
    <property type="component" value="Unplaced"/>
</dbReference>
<dbReference type="GO" id="GO:0005739">
    <property type="term" value="C:mitochondrion"/>
    <property type="evidence" value="ECO:0000250"/>
    <property type="project" value="UniProtKB"/>
</dbReference>
<dbReference type="GO" id="GO:0043023">
    <property type="term" value="F:ribosomal large subunit binding"/>
    <property type="evidence" value="ECO:0000318"/>
    <property type="project" value="GO_Central"/>
</dbReference>
<dbReference type="GO" id="GO:0032790">
    <property type="term" value="P:ribosome disassembly"/>
    <property type="evidence" value="ECO:0000250"/>
    <property type="project" value="UniProtKB"/>
</dbReference>
<dbReference type="GO" id="GO:0006412">
    <property type="term" value="P:translation"/>
    <property type="evidence" value="ECO:0000318"/>
    <property type="project" value="GO_Central"/>
</dbReference>
<dbReference type="FunFam" id="3.30.1360.40:FF:000007">
    <property type="entry name" value="ribosome-recycling factor, mitochondrial isoform X1"/>
    <property type="match status" value="1"/>
</dbReference>
<dbReference type="FunFam" id="1.10.132.20:FF:000003">
    <property type="entry name" value="ribosome-recycling factor, mitochondrial isoform X2"/>
    <property type="match status" value="1"/>
</dbReference>
<dbReference type="Gene3D" id="3.30.1360.40">
    <property type="match status" value="1"/>
</dbReference>
<dbReference type="Gene3D" id="1.10.132.20">
    <property type="entry name" value="Ribosome-recycling factor"/>
    <property type="match status" value="1"/>
</dbReference>
<dbReference type="InterPro" id="IPR002661">
    <property type="entry name" value="Ribosome_recyc_fac"/>
</dbReference>
<dbReference type="InterPro" id="IPR023584">
    <property type="entry name" value="Ribosome_recyc_fac_dom"/>
</dbReference>
<dbReference type="InterPro" id="IPR036191">
    <property type="entry name" value="RRF_sf"/>
</dbReference>
<dbReference type="PANTHER" id="PTHR20982">
    <property type="entry name" value="RIBOSOME RECYCLING FACTOR"/>
    <property type="match status" value="1"/>
</dbReference>
<dbReference type="PANTHER" id="PTHR20982:SF10">
    <property type="entry name" value="RIBOSOME-RECYCLING FACTOR, MITOCHONDRIAL"/>
    <property type="match status" value="1"/>
</dbReference>
<dbReference type="Pfam" id="PF01765">
    <property type="entry name" value="RRF"/>
    <property type="match status" value="1"/>
</dbReference>
<dbReference type="SUPFAM" id="SSF55194">
    <property type="entry name" value="Ribosome recycling factor, RRF"/>
    <property type="match status" value="1"/>
</dbReference>
<reference key="1">
    <citation type="submission" date="2006-08" db="EMBL/GenBank/DDBJ databases">
        <authorList>
            <consortium name="NIH - Mammalian Gene Collection (MGC) project"/>
        </authorList>
    </citation>
    <scope>NUCLEOTIDE SEQUENCE [LARGE SCALE MRNA]</scope>
    <source>
        <strain>Hereford</strain>
        <tissue>Fetal cerebellum</tissue>
    </source>
</reference>
<gene>
    <name type="primary">MRRF</name>
</gene>
<protein>
    <recommendedName>
        <fullName>Ribosome-recycling factor, mitochondrial</fullName>
        <shortName>RRF</shortName>
    </recommendedName>
    <alternativeName>
        <fullName>Ribosome-releasing factor, mitochondrial</fullName>
    </alternativeName>
</protein>
<comment type="function">
    <text evidence="1">Responsible for the disassembly of ribosomes from messenger RNA at the termination of mitochondrial protein biosynthesis. Acts in collaboration with GFM2. Promotes mitochondrial ribosome recycling by dissolution of intersubunit contacts.</text>
</comment>
<comment type="subcellular location">
    <subcellularLocation>
        <location evidence="1">Mitochondrion</location>
    </subcellularLocation>
</comment>
<comment type="similarity">
    <text evidence="3">Belongs to the RRF family.</text>
</comment>